<reference key="1">
    <citation type="journal article" date="1997" name="Nature">
        <title>The complete genome sequence of the hyperthermophilic, sulphate-reducing archaeon Archaeoglobus fulgidus.</title>
        <authorList>
            <person name="Klenk H.-P."/>
            <person name="Clayton R.A."/>
            <person name="Tomb J.-F."/>
            <person name="White O."/>
            <person name="Nelson K.E."/>
            <person name="Ketchum K.A."/>
            <person name="Dodson R.J."/>
            <person name="Gwinn M.L."/>
            <person name="Hickey E.K."/>
            <person name="Peterson J.D."/>
            <person name="Richardson D.L."/>
            <person name="Kerlavage A.R."/>
            <person name="Graham D.E."/>
            <person name="Kyrpides N.C."/>
            <person name="Fleischmann R.D."/>
            <person name="Quackenbush J."/>
            <person name="Lee N.H."/>
            <person name="Sutton G.G."/>
            <person name="Gill S.R."/>
            <person name="Kirkness E.F."/>
            <person name="Dougherty B.A."/>
            <person name="McKenney K."/>
            <person name="Adams M.D."/>
            <person name="Loftus B.J."/>
            <person name="Peterson S.N."/>
            <person name="Reich C.I."/>
            <person name="McNeil L.K."/>
            <person name="Badger J.H."/>
            <person name="Glodek A."/>
            <person name="Zhou L."/>
            <person name="Overbeek R."/>
            <person name="Gocayne J.D."/>
            <person name="Weidman J.F."/>
            <person name="McDonald L.A."/>
            <person name="Utterback T.R."/>
            <person name="Cotton M.D."/>
            <person name="Spriggs T."/>
            <person name="Artiach P."/>
            <person name="Kaine B.P."/>
            <person name="Sykes S.M."/>
            <person name="Sadow P.W."/>
            <person name="D'Andrea K.P."/>
            <person name="Bowman C."/>
            <person name="Fujii C."/>
            <person name="Garland S.A."/>
            <person name="Mason T.M."/>
            <person name="Olsen G.J."/>
            <person name="Fraser C.M."/>
            <person name="Smith H.O."/>
            <person name="Woese C.R."/>
            <person name="Venter J.C."/>
        </authorList>
    </citation>
    <scope>NUCLEOTIDE SEQUENCE [LARGE SCALE GENOMIC DNA]</scope>
    <source>
        <strain>ATCC 49558 / DSM 4304 / JCM 9628 / NBRC 100126 / VC-16</strain>
    </source>
</reference>
<protein>
    <recommendedName>
        <fullName>Uncharacterized protein AF_1573</fullName>
    </recommendedName>
</protein>
<proteinExistence type="predicted"/>
<feature type="chain" id="PRO_0000128027" description="Uncharacterized protein AF_1573">
    <location>
        <begin position="1"/>
        <end position="131"/>
    </location>
</feature>
<feature type="transmembrane region" description="Helical" evidence="1">
    <location>
        <begin position="17"/>
        <end position="39"/>
    </location>
</feature>
<name>Y1573_ARCFU</name>
<organism>
    <name type="scientific">Archaeoglobus fulgidus (strain ATCC 49558 / DSM 4304 / JCM 9628 / NBRC 100126 / VC-16)</name>
    <dbReference type="NCBI Taxonomy" id="224325"/>
    <lineage>
        <taxon>Archaea</taxon>
        <taxon>Methanobacteriati</taxon>
        <taxon>Methanobacteriota</taxon>
        <taxon>Archaeoglobi</taxon>
        <taxon>Archaeoglobales</taxon>
        <taxon>Archaeoglobaceae</taxon>
        <taxon>Archaeoglobus</taxon>
    </lineage>
</organism>
<comment type="subcellular location">
    <subcellularLocation>
        <location evidence="2">Membrane</location>
        <topology evidence="2">Single-pass membrane protein</topology>
    </subcellularLocation>
</comment>
<keyword id="KW-0472">Membrane</keyword>
<keyword id="KW-1185">Reference proteome</keyword>
<keyword id="KW-0812">Transmembrane</keyword>
<keyword id="KW-1133">Transmembrane helix</keyword>
<dbReference type="EMBL" id="AE000782">
    <property type="protein sequence ID" value="AAB89682.1"/>
    <property type="molecule type" value="Genomic_DNA"/>
</dbReference>
<dbReference type="PIR" id="D69446">
    <property type="entry name" value="D69446"/>
</dbReference>
<dbReference type="SMR" id="O28699"/>
<dbReference type="STRING" id="224325.AF_1573"/>
<dbReference type="PaxDb" id="224325-AF_1573"/>
<dbReference type="DNASU" id="1484801"/>
<dbReference type="EnsemblBacteria" id="AAB89682">
    <property type="protein sequence ID" value="AAB89682"/>
    <property type="gene ID" value="AF_1573"/>
</dbReference>
<dbReference type="KEGG" id="afu:AF_1573"/>
<dbReference type="eggNOG" id="arCOG07521">
    <property type="taxonomic scope" value="Archaea"/>
</dbReference>
<dbReference type="HOGENOM" id="CLU_2044278_0_0_2"/>
<dbReference type="Proteomes" id="UP000002199">
    <property type="component" value="Chromosome"/>
</dbReference>
<dbReference type="GO" id="GO:0016020">
    <property type="term" value="C:membrane"/>
    <property type="evidence" value="ECO:0007669"/>
    <property type="project" value="UniProtKB-SubCell"/>
</dbReference>
<sequence>MRPQQYGGECGMKKKHVILLILILLPVVFLHIMLATWGLSMSFYVKRLSSPPQNYFEITEEDFREIPELKKIFEDLRKLAPGESRSYELDIDTGNKVHSYLTEKQAGVGECSYTYCFKYGDAYYGAHMGTP</sequence>
<gene>
    <name type="ordered locus">AF_1573</name>
</gene>
<evidence type="ECO:0000255" key="1"/>
<evidence type="ECO:0000305" key="2"/>
<accession>O28699</accession>